<protein>
    <recommendedName>
        <fullName evidence="1">Type III pantothenate kinase</fullName>
        <ecNumber evidence="1">2.7.1.33</ecNumber>
    </recommendedName>
    <alternativeName>
        <fullName evidence="1">PanK-III</fullName>
    </alternativeName>
    <alternativeName>
        <fullName evidence="1">Pantothenic acid kinase</fullName>
    </alternativeName>
</protein>
<gene>
    <name evidence="1" type="primary">coaX</name>
    <name type="ordered locus">Acid_7558</name>
</gene>
<reference key="1">
    <citation type="journal article" date="2009" name="Appl. Environ. Microbiol.">
        <title>Three genomes from the phylum Acidobacteria provide insight into the lifestyles of these microorganisms in soils.</title>
        <authorList>
            <person name="Ward N.L."/>
            <person name="Challacombe J.F."/>
            <person name="Janssen P.H."/>
            <person name="Henrissat B."/>
            <person name="Coutinho P.M."/>
            <person name="Wu M."/>
            <person name="Xie G."/>
            <person name="Haft D.H."/>
            <person name="Sait M."/>
            <person name="Badger J."/>
            <person name="Barabote R.D."/>
            <person name="Bradley B."/>
            <person name="Brettin T.S."/>
            <person name="Brinkac L.M."/>
            <person name="Bruce D."/>
            <person name="Creasy T."/>
            <person name="Daugherty S.C."/>
            <person name="Davidsen T.M."/>
            <person name="DeBoy R.T."/>
            <person name="Detter J.C."/>
            <person name="Dodson R.J."/>
            <person name="Durkin A.S."/>
            <person name="Ganapathy A."/>
            <person name="Gwinn-Giglio M."/>
            <person name="Han C.S."/>
            <person name="Khouri H."/>
            <person name="Kiss H."/>
            <person name="Kothari S.P."/>
            <person name="Madupu R."/>
            <person name="Nelson K.E."/>
            <person name="Nelson W.C."/>
            <person name="Paulsen I."/>
            <person name="Penn K."/>
            <person name="Ren Q."/>
            <person name="Rosovitz M.J."/>
            <person name="Selengut J.D."/>
            <person name="Shrivastava S."/>
            <person name="Sullivan S.A."/>
            <person name="Tapia R."/>
            <person name="Thompson L.S."/>
            <person name="Watkins K.L."/>
            <person name="Yang Q."/>
            <person name="Yu C."/>
            <person name="Zafar N."/>
            <person name="Zhou L."/>
            <person name="Kuske C.R."/>
        </authorList>
    </citation>
    <scope>NUCLEOTIDE SEQUENCE [LARGE SCALE GENOMIC DNA]</scope>
    <source>
        <strain>Ellin6076</strain>
    </source>
</reference>
<feature type="chain" id="PRO_1000054410" description="Type III pantothenate kinase">
    <location>
        <begin position="1"/>
        <end position="261"/>
    </location>
</feature>
<feature type="active site" description="Proton acceptor" evidence="1">
    <location>
        <position position="109"/>
    </location>
</feature>
<feature type="binding site" evidence="1">
    <location>
        <begin position="6"/>
        <end position="13"/>
    </location>
    <ligand>
        <name>ATP</name>
        <dbReference type="ChEBI" id="CHEBI:30616"/>
    </ligand>
</feature>
<feature type="binding site" evidence="1">
    <location>
        <position position="100"/>
    </location>
    <ligand>
        <name>substrate</name>
    </ligand>
</feature>
<feature type="binding site" evidence="1">
    <location>
        <begin position="107"/>
        <end position="110"/>
    </location>
    <ligand>
        <name>substrate</name>
    </ligand>
</feature>
<feature type="binding site" evidence="1">
    <location>
        <position position="129"/>
    </location>
    <ligand>
        <name>K(+)</name>
        <dbReference type="ChEBI" id="CHEBI:29103"/>
    </ligand>
</feature>
<feature type="binding site" evidence="1">
    <location>
        <position position="132"/>
    </location>
    <ligand>
        <name>ATP</name>
        <dbReference type="ChEBI" id="CHEBI:30616"/>
    </ligand>
</feature>
<feature type="binding site" evidence="1">
    <location>
        <position position="184"/>
    </location>
    <ligand>
        <name>substrate</name>
    </ligand>
</feature>
<evidence type="ECO:0000255" key="1">
    <source>
        <dbReference type="HAMAP-Rule" id="MF_01274"/>
    </source>
</evidence>
<organism>
    <name type="scientific">Solibacter usitatus (strain Ellin6076)</name>
    <dbReference type="NCBI Taxonomy" id="234267"/>
    <lineage>
        <taxon>Bacteria</taxon>
        <taxon>Pseudomonadati</taxon>
        <taxon>Acidobacteriota</taxon>
        <taxon>Terriglobia</taxon>
        <taxon>Bryobacterales</taxon>
        <taxon>Solibacteraceae</taxon>
        <taxon>Candidatus Solibacter</taxon>
    </lineage>
</organism>
<accession>Q01PF4</accession>
<comment type="function">
    <text evidence="1">Catalyzes the phosphorylation of pantothenate (Pan), the first step in CoA biosynthesis.</text>
</comment>
<comment type="catalytic activity">
    <reaction evidence="1">
        <text>(R)-pantothenate + ATP = (R)-4'-phosphopantothenate + ADP + H(+)</text>
        <dbReference type="Rhea" id="RHEA:16373"/>
        <dbReference type="ChEBI" id="CHEBI:10986"/>
        <dbReference type="ChEBI" id="CHEBI:15378"/>
        <dbReference type="ChEBI" id="CHEBI:29032"/>
        <dbReference type="ChEBI" id="CHEBI:30616"/>
        <dbReference type="ChEBI" id="CHEBI:456216"/>
        <dbReference type="EC" id="2.7.1.33"/>
    </reaction>
</comment>
<comment type="cofactor">
    <cofactor evidence="1">
        <name>NH4(+)</name>
        <dbReference type="ChEBI" id="CHEBI:28938"/>
    </cofactor>
    <cofactor evidence="1">
        <name>K(+)</name>
        <dbReference type="ChEBI" id="CHEBI:29103"/>
    </cofactor>
    <text evidence="1">A monovalent cation. Ammonium or potassium.</text>
</comment>
<comment type="pathway">
    <text evidence="1">Cofactor biosynthesis; coenzyme A biosynthesis; CoA from (R)-pantothenate: step 1/5.</text>
</comment>
<comment type="subunit">
    <text evidence="1">Homodimer.</text>
</comment>
<comment type="subcellular location">
    <subcellularLocation>
        <location evidence="1">Cytoplasm</location>
    </subcellularLocation>
</comment>
<comment type="similarity">
    <text evidence="1">Belongs to the type III pantothenate kinase family.</text>
</comment>
<proteinExistence type="inferred from homology"/>
<keyword id="KW-0067">ATP-binding</keyword>
<keyword id="KW-0173">Coenzyme A biosynthesis</keyword>
<keyword id="KW-0963">Cytoplasm</keyword>
<keyword id="KW-0418">Kinase</keyword>
<keyword id="KW-0479">Metal-binding</keyword>
<keyword id="KW-0547">Nucleotide-binding</keyword>
<keyword id="KW-0630">Potassium</keyword>
<keyword id="KW-0808">Transferase</keyword>
<name>COAX_SOLUE</name>
<dbReference type="EC" id="2.7.1.33" evidence="1"/>
<dbReference type="EMBL" id="CP000473">
    <property type="protein sequence ID" value="ABJ88466.1"/>
    <property type="molecule type" value="Genomic_DNA"/>
</dbReference>
<dbReference type="SMR" id="Q01PF4"/>
<dbReference type="STRING" id="234267.Acid_7558"/>
<dbReference type="KEGG" id="sus:Acid_7558"/>
<dbReference type="eggNOG" id="COG1521">
    <property type="taxonomic scope" value="Bacteria"/>
</dbReference>
<dbReference type="HOGENOM" id="CLU_066627_1_0_0"/>
<dbReference type="InParanoid" id="Q01PF4"/>
<dbReference type="OrthoDB" id="9804707at2"/>
<dbReference type="UniPathway" id="UPA00241">
    <property type="reaction ID" value="UER00352"/>
</dbReference>
<dbReference type="GO" id="GO:0005737">
    <property type="term" value="C:cytoplasm"/>
    <property type="evidence" value="ECO:0007669"/>
    <property type="project" value="UniProtKB-SubCell"/>
</dbReference>
<dbReference type="GO" id="GO:0005524">
    <property type="term" value="F:ATP binding"/>
    <property type="evidence" value="ECO:0007669"/>
    <property type="project" value="UniProtKB-UniRule"/>
</dbReference>
<dbReference type="GO" id="GO:0046872">
    <property type="term" value="F:metal ion binding"/>
    <property type="evidence" value="ECO:0007669"/>
    <property type="project" value="UniProtKB-KW"/>
</dbReference>
<dbReference type="GO" id="GO:0004594">
    <property type="term" value="F:pantothenate kinase activity"/>
    <property type="evidence" value="ECO:0007669"/>
    <property type="project" value="UniProtKB-UniRule"/>
</dbReference>
<dbReference type="GO" id="GO:0015937">
    <property type="term" value="P:coenzyme A biosynthetic process"/>
    <property type="evidence" value="ECO:0007669"/>
    <property type="project" value="UniProtKB-UniRule"/>
</dbReference>
<dbReference type="CDD" id="cd24015">
    <property type="entry name" value="ASKHA_NBD_PanK-III"/>
    <property type="match status" value="1"/>
</dbReference>
<dbReference type="Gene3D" id="3.30.420.40">
    <property type="match status" value="2"/>
</dbReference>
<dbReference type="HAMAP" id="MF_01274">
    <property type="entry name" value="Pantothen_kinase_3"/>
    <property type="match status" value="1"/>
</dbReference>
<dbReference type="InterPro" id="IPR043129">
    <property type="entry name" value="ATPase_NBD"/>
</dbReference>
<dbReference type="InterPro" id="IPR004619">
    <property type="entry name" value="Type_III_PanK"/>
</dbReference>
<dbReference type="NCBIfam" id="TIGR00671">
    <property type="entry name" value="baf"/>
    <property type="match status" value="1"/>
</dbReference>
<dbReference type="NCBIfam" id="NF009848">
    <property type="entry name" value="PRK13318.1-6"/>
    <property type="match status" value="1"/>
</dbReference>
<dbReference type="NCBIfam" id="NF009855">
    <property type="entry name" value="PRK13321.1"/>
    <property type="match status" value="1"/>
</dbReference>
<dbReference type="PANTHER" id="PTHR34265">
    <property type="entry name" value="TYPE III PANTOTHENATE KINASE"/>
    <property type="match status" value="1"/>
</dbReference>
<dbReference type="PANTHER" id="PTHR34265:SF1">
    <property type="entry name" value="TYPE III PANTOTHENATE KINASE"/>
    <property type="match status" value="1"/>
</dbReference>
<dbReference type="Pfam" id="PF03309">
    <property type="entry name" value="Pan_kinase"/>
    <property type="match status" value="1"/>
</dbReference>
<dbReference type="SUPFAM" id="SSF53067">
    <property type="entry name" value="Actin-like ATPase domain"/>
    <property type="match status" value="2"/>
</dbReference>
<sequence length="261" mass="28345">MLLALDAGNSNITIGAFEGSDLVCQWRLRTVHDQTADEWGILLRNLFSPAGLDIRRVDGIIISSVVPPIDSTLAFMTQRYFHTNAMFVGPHTDIGLEIRYDNPNEVGADRLVNGVAGFYKYGGPCVVVDMGTTINFDCISAAGEYLGGSIAVGIGISINALFSKTARLPKVDFRRPKNVIGTNTVASIQSGLYYGAIGMIDGILERVISQLGPETKAIATGGQAHMIVEGSRYLKTYDEHLTLQGLQMIWERNHPEAPQSE</sequence>